<gene>
    <name evidence="1" type="primary">aroE</name>
    <name type="ordered locus">PD_1532</name>
</gene>
<comment type="function">
    <text evidence="1">Involved in the biosynthesis of the chorismate, which leads to the biosynthesis of aromatic amino acids. Catalyzes the reversible NADPH linked reduction of 3-dehydroshikimate (DHSA) to yield shikimate (SA).</text>
</comment>
<comment type="catalytic activity">
    <reaction evidence="1">
        <text>shikimate + NADP(+) = 3-dehydroshikimate + NADPH + H(+)</text>
        <dbReference type="Rhea" id="RHEA:17737"/>
        <dbReference type="ChEBI" id="CHEBI:15378"/>
        <dbReference type="ChEBI" id="CHEBI:16630"/>
        <dbReference type="ChEBI" id="CHEBI:36208"/>
        <dbReference type="ChEBI" id="CHEBI:57783"/>
        <dbReference type="ChEBI" id="CHEBI:58349"/>
        <dbReference type="EC" id="1.1.1.25"/>
    </reaction>
</comment>
<comment type="pathway">
    <text evidence="1">Metabolic intermediate biosynthesis; chorismate biosynthesis; chorismate from D-erythrose 4-phosphate and phosphoenolpyruvate: step 4/7.</text>
</comment>
<comment type="subunit">
    <text evidence="1">Homodimer.</text>
</comment>
<comment type="similarity">
    <text evidence="1">Belongs to the shikimate dehydrogenase family.</text>
</comment>
<reference key="1">
    <citation type="journal article" date="2003" name="J. Bacteriol.">
        <title>Comparative analyses of the complete genome sequences of Pierce's disease and citrus variegated chlorosis strains of Xylella fastidiosa.</title>
        <authorList>
            <person name="Van Sluys M.A."/>
            <person name="de Oliveira M.C."/>
            <person name="Monteiro-Vitorello C.B."/>
            <person name="Miyaki C.Y."/>
            <person name="Furlan L.R."/>
            <person name="Camargo L.E.A."/>
            <person name="da Silva A.C.R."/>
            <person name="Moon D.H."/>
            <person name="Takita M.A."/>
            <person name="Lemos E.G.M."/>
            <person name="Machado M.A."/>
            <person name="Ferro M.I.T."/>
            <person name="da Silva F.R."/>
            <person name="Goldman M.H.S."/>
            <person name="Goldman G.H."/>
            <person name="Lemos M.V.F."/>
            <person name="El-Dorry H."/>
            <person name="Tsai S.M."/>
            <person name="Carrer H."/>
            <person name="Carraro D.M."/>
            <person name="de Oliveira R.C."/>
            <person name="Nunes L.R."/>
            <person name="Siqueira W.J."/>
            <person name="Coutinho L.L."/>
            <person name="Kimura E.T."/>
            <person name="Ferro E.S."/>
            <person name="Harakava R."/>
            <person name="Kuramae E.E."/>
            <person name="Marino C.L."/>
            <person name="Giglioti E."/>
            <person name="Abreu I.L."/>
            <person name="Alves L.M.C."/>
            <person name="do Amaral A.M."/>
            <person name="Baia G.S."/>
            <person name="Blanco S.R."/>
            <person name="Brito M.S."/>
            <person name="Cannavan F.S."/>
            <person name="Celestino A.V."/>
            <person name="da Cunha A.F."/>
            <person name="Fenille R.C."/>
            <person name="Ferro J.A."/>
            <person name="Formighieri E.F."/>
            <person name="Kishi L.T."/>
            <person name="Leoni S.G."/>
            <person name="Oliveira A.R."/>
            <person name="Rosa V.E. Jr."/>
            <person name="Sassaki F.T."/>
            <person name="Sena J.A.D."/>
            <person name="de Souza A.A."/>
            <person name="Truffi D."/>
            <person name="Tsukumo F."/>
            <person name="Yanai G.M."/>
            <person name="Zaros L.G."/>
            <person name="Civerolo E.L."/>
            <person name="Simpson A.J.G."/>
            <person name="Almeida N.F. Jr."/>
            <person name="Setubal J.C."/>
            <person name="Kitajima J.P."/>
        </authorList>
    </citation>
    <scope>NUCLEOTIDE SEQUENCE [LARGE SCALE GENOMIC DNA]</scope>
    <source>
        <strain>Temecula1 / ATCC 700964</strain>
    </source>
</reference>
<feature type="chain" id="PRO_0000136055" description="Shikimate dehydrogenase (NADP(+))">
    <location>
        <begin position="1"/>
        <end position="282"/>
    </location>
</feature>
<feature type="active site" description="Proton acceptor" evidence="1">
    <location>
        <position position="67"/>
    </location>
</feature>
<feature type="binding site" evidence="1">
    <location>
        <begin position="16"/>
        <end position="18"/>
    </location>
    <ligand>
        <name>shikimate</name>
        <dbReference type="ChEBI" id="CHEBI:36208"/>
    </ligand>
</feature>
<feature type="binding site" evidence="1">
    <location>
        <position position="63"/>
    </location>
    <ligand>
        <name>shikimate</name>
        <dbReference type="ChEBI" id="CHEBI:36208"/>
    </ligand>
</feature>
<feature type="binding site" evidence="1">
    <location>
        <position position="88"/>
    </location>
    <ligand>
        <name>shikimate</name>
        <dbReference type="ChEBI" id="CHEBI:36208"/>
    </ligand>
</feature>
<feature type="binding site" evidence="1">
    <location>
        <position position="103"/>
    </location>
    <ligand>
        <name>shikimate</name>
        <dbReference type="ChEBI" id="CHEBI:36208"/>
    </ligand>
</feature>
<feature type="binding site" evidence="1">
    <location>
        <begin position="128"/>
        <end position="132"/>
    </location>
    <ligand>
        <name>NADP(+)</name>
        <dbReference type="ChEBI" id="CHEBI:58349"/>
    </ligand>
</feature>
<feature type="binding site" evidence="1">
    <location>
        <position position="243"/>
    </location>
    <ligand>
        <name>NADP(+)</name>
        <dbReference type="ChEBI" id="CHEBI:58349"/>
    </ligand>
</feature>
<dbReference type="EC" id="1.1.1.25" evidence="1"/>
<dbReference type="EMBL" id="AE009442">
    <property type="protein sequence ID" value="AAO29374.1"/>
    <property type="molecule type" value="Genomic_DNA"/>
</dbReference>
<dbReference type="RefSeq" id="WP_004088679.1">
    <property type="nucleotide sequence ID" value="NC_004556.1"/>
</dbReference>
<dbReference type="SMR" id="Q87BC5"/>
<dbReference type="GeneID" id="93905359"/>
<dbReference type="KEGG" id="xft:PD_1532"/>
<dbReference type="HOGENOM" id="CLU_044063_2_1_6"/>
<dbReference type="UniPathway" id="UPA00053">
    <property type="reaction ID" value="UER00087"/>
</dbReference>
<dbReference type="Proteomes" id="UP000002516">
    <property type="component" value="Chromosome"/>
</dbReference>
<dbReference type="GO" id="GO:0005829">
    <property type="term" value="C:cytosol"/>
    <property type="evidence" value="ECO:0007669"/>
    <property type="project" value="TreeGrafter"/>
</dbReference>
<dbReference type="GO" id="GO:0050661">
    <property type="term" value="F:NADP binding"/>
    <property type="evidence" value="ECO:0007669"/>
    <property type="project" value="InterPro"/>
</dbReference>
<dbReference type="GO" id="GO:0004764">
    <property type="term" value="F:shikimate 3-dehydrogenase (NADP+) activity"/>
    <property type="evidence" value="ECO:0007669"/>
    <property type="project" value="UniProtKB-UniRule"/>
</dbReference>
<dbReference type="GO" id="GO:0008652">
    <property type="term" value="P:amino acid biosynthetic process"/>
    <property type="evidence" value="ECO:0007669"/>
    <property type="project" value="UniProtKB-KW"/>
</dbReference>
<dbReference type="GO" id="GO:0009073">
    <property type="term" value="P:aromatic amino acid family biosynthetic process"/>
    <property type="evidence" value="ECO:0007669"/>
    <property type="project" value="UniProtKB-KW"/>
</dbReference>
<dbReference type="GO" id="GO:0009423">
    <property type="term" value="P:chorismate biosynthetic process"/>
    <property type="evidence" value="ECO:0007669"/>
    <property type="project" value="UniProtKB-UniRule"/>
</dbReference>
<dbReference type="GO" id="GO:0019632">
    <property type="term" value="P:shikimate metabolic process"/>
    <property type="evidence" value="ECO:0007669"/>
    <property type="project" value="InterPro"/>
</dbReference>
<dbReference type="FunFam" id="3.40.50.10860:FF:000006">
    <property type="entry name" value="Shikimate dehydrogenase (NADP(+))"/>
    <property type="match status" value="1"/>
</dbReference>
<dbReference type="Gene3D" id="3.40.50.10860">
    <property type="entry name" value="Leucine Dehydrogenase, chain A, domain 1"/>
    <property type="match status" value="1"/>
</dbReference>
<dbReference type="Gene3D" id="3.40.50.720">
    <property type="entry name" value="NAD(P)-binding Rossmann-like Domain"/>
    <property type="match status" value="1"/>
</dbReference>
<dbReference type="HAMAP" id="MF_00222">
    <property type="entry name" value="Shikimate_DH_AroE"/>
    <property type="match status" value="1"/>
</dbReference>
<dbReference type="InterPro" id="IPR046346">
    <property type="entry name" value="Aminoacid_DH-like_N_sf"/>
</dbReference>
<dbReference type="InterPro" id="IPR036291">
    <property type="entry name" value="NAD(P)-bd_dom_sf"/>
</dbReference>
<dbReference type="InterPro" id="IPR041121">
    <property type="entry name" value="SDH_C"/>
</dbReference>
<dbReference type="InterPro" id="IPR011342">
    <property type="entry name" value="Shikimate_DH"/>
</dbReference>
<dbReference type="InterPro" id="IPR013708">
    <property type="entry name" value="Shikimate_DH-bd_N"/>
</dbReference>
<dbReference type="InterPro" id="IPR022893">
    <property type="entry name" value="Shikimate_DH_fam"/>
</dbReference>
<dbReference type="InterPro" id="IPR006151">
    <property type="entry name" value="Shikm_DH/Glu-tRNA_Rdtase"/>
</dbReference>
<dbReference type="NCBIfam" id="TIGR00507">
    <property type="entry name" value="aroE"/>
    <property type="match status" value="1"/>
</dbReference>
<dbReference type="NCBIfam" id="NF001310">
    <property type="entry name" value="PRK00258.1-2"/>
    <property type="match status" value="1"/>
</dbReference>
<dbReference type="PANTHER" id="PTHR21089:SF1">
    <property type="entry name" value="BIFUNCTIONAL 3-DEHYDROQUINATE DEHYDRATASE_SHIKIMATE DEHYDROGENASE, CHLOROPLASTIC"/>
    <property type="match status" value="1"/>
</dbReference>
<dbReference type="PANTHER" id="PTHR21089">
    <property type="entry name" value="SHIKIMATE DEHYDROGENASE"/>
    <property type="match status" value="1"/>
</dbReference>
<dbReference type="Pfam" id="PF18317">
    <property type="entry name" value="SDH_C"/>
    <property type="match status" value="1"/>
</dbReference>
<dbReference type="Pfam" id="PF01488">
    <property type="entry name" value="Shikimate_DH"/>
    <property type="match status" value="1"/>
</dbReference>
<dbReference type="Pfam" id="PF08501">
    <property type="entry name" value="Shikimate_dh_N"/>
    <property type="match status" value="1"/>
</dbReference>
<dbReference type="SUPFAM" id="SSF53223">
    <property type="entry name" value="Aminoacid dehydrogenase-like, N-terminal domain"/>
    <property type="match status" value="1"/>
</dbReference>
<dbReference type="SUPFAM" id="SSF51735">
    <property type="entry name" value="NAD(P)-binding Rossmann-fold domains"/>
    <property type="match status" value="1"/>
</dbReference>
<keyword id="KW-0028">Amino-acid biosynthesis</keyword>
<keyword id="KW-0057">Aromatic amino acid biosynthesis</keyword>
<keyword id="KW-0521">NADP</keyword>
<keyword id="KW-0560">Oxidoreductase</keyword>
<keyword id="KW-1185">Reference proteome</keyword>
<accession>Q87BC5</accession>
<evidence type="ECO:0000255" key="1">
    <source>
        <dbReference type="HAMAP-Rule" id="MF_00222"/>
    </source>
</evidence>
<proteinExistence type="inferred from homology"/>
<name>AROE_XYLFT</name>
<sequence>MPVSRFAVFGHPIAHSLSPRIHTEFGRQMGVVLDYLAFDVAPDAFRVSLEHFVAEGGCGANVTLPLKEAAFEVCTTLSARARRAGAVNTLSRVDGVWHGENTDGTGLVRNLTERHGLDLRGRRALLLGAGGAARGVAPALLDAGITEMVIVNRSPERADMLCDALGEPGKVSARYWGDLGDLGNFELIINATSIGNTSDMRTFSLPRSLLDSMTAAVDLNYGSAAVPFLAWAHAVETRYAIDGLGMLVEQAAESFSLWHGRRPDTDPVYTVLHSEYGVPGRS</sequence>
<protein>
    <recommendedName>
        <fullName evidence="1">Shikimate dehydrogenase (NADP(+))</fullName>
        <shortName evidence="1">SDH</shortName>
        <ecNumber evidence="1">1.1.1.25</ecNumber>
    </recommendedName>
</protein>
<organism>
    <name type="scientific">Xylella fastidiosa (strain Temecula1 / ATCC 700964)</name>
    <dbReference type="NCBI Taxonomy" id="183190"/>
    <lineage>
        <taxon>Bacteria</taxon>
        <taxon>Pseudomonadati</taxon>
        <taxon>Pseudomonadota</taxon>
        <taxon>Gammaproteobacteria</taxon>
        <taxon>Lysobacterales</taxon>
        <taxon>Lysobacteraceae</taxon>
        <taxon>Xylella</taxon>
    </lineage>
</organism>